<reference key="1">
    <citation type="journal article" date="2000" name="Nature">
        <title>Complete genome sequence of Pseudomonas aeruginosa PAO1, an opportunistic pathogen.</title>
        <authorList>
            <person name="Stover C.K."/>
            <person name="Pham X.-Q.T."/>
            <person name="Erwin A.L."/>
            <person name="Mizoguchi S.D."/>
            <person name="Warrener P."/>
            <person name="Hickey M.J."/>
            <person name="Brinkman F.S.L."/>
            <person name="Hufnagle W.O."/>
            <person name="Kowalik D.J."/>
            <person name="Lagrou M."/>
            <person name="Garber R.L."/>
            <person name="Goltry L."/>
            <person name="Tolentino E."/>
            <person name="Westbrock-Wadman S."/>
            <person name="Yuan Y."/>
            <person name="Brody L.L."/>
            <person name="Coulter S.N."/>
            <person name="Folger K.R."/>
            <person name="Kas A."/>
            <person name="Larbig K."/>
            <person name="Lim R.M."/>
            <person name="Smith K.A."/>
            <person name="Spencer D.H."/>
            <person name="Wong G.K.-S."/>
            <person name="Wu Z."/>
            <person name="Paulsen I.T."/>
            <person name="Reizer J."/>
            <person name="Saier M.H. Jr."/>
            <person name="Hancock R.E.W."/>
            <person name="Lory S."/>
            <person name="Olson M.V."/>
        </authorList>
    </citation>
    <scope>NUCLEOTIDE SEQUENCE [LARGE SCALE GENOMIC DNA]</scope>
    <source>
        <strain>ATCC 15692 / DSM 22644 / CIP 104116 / JCM 14847 / LMG 12228 / 1C / PRS 101 / PAO1</strain>
    </source>
</reference>
<sequence length="205" mass="22099">MSVVFVAASKLPTPFGEFTMHGFLDEESGKEHVALSMGDIADGAPVLGRLHSECLTGDALFSLRCDCGFQLEGALAAIAEEGRGVLLYLRQEGRGIGLLNKIRAYELQDGGADTVEANLQLGFGADQRDYAMCQPMLAHLGVSSLRLMTNNPRKVKALESYAITVAERVPLQKGLNKHNRRYLATKAGKLGHMLGSLHQGEAETT</sequence>
<feature type="chain" id="PRO_0000151768" description="GTP cyclohydrolase-2">
    <location>
        <begin position="1"/>
        <end position="205"/>
    </location>
</feature>
<feature type="active site" description="Proton acceptor" evidence="1">
    <location>
        <position position="126"/>
    </location>
</feature>
<feature type="active site" description="Nucleophile" evidence="1">
    <location>
        <position position="128"/>
    </location>
</feature>
<feature type="binding site" evidence="1">
    <location>
        <begin position="49"/>
        <end position="53"/>
    </location>
    <ligand>
        <name>GTP</name>
        <dbReference type="ChEBI" id="CHEBI:37565"/>
    </ligand>
</feature>
<feature type="binding site" evidence="1">
    <location>
        <position position="54"/>
    </location>
    <ligand>
        <name>Zn(2+)</name>
        <dbReference type="ChEBI" id="CHEBI:29105"/>
        <note>catalytic</note>
    </ligand>
</feature>
<feature type="binding site" evidence="1">
    <location>
        <position position="65"/>
    </location>
    <ligand>
        <name>Zn(2+)</name>
        <dbReference type="ChEBI" id="CHEBI:29105"/>
        <note>catalytic</note>
    </ligand>
</feature>
<feature type="binding site" evidence="1">
    <location>
        <position position="67"/>
    </location>
    <ligand>
        <name>Zn(2+)</name>
        <dbReference type="ChEBI" id="CHEBI:29105"/>
        <note>catalytic</note>
    </ligand>
</feature>
<feature type="binding site" evidence="1">
    <location>
        <position position="70"/>
    </location>
    <ligand>
        <name>GTP</name>
        <dbReference type="ChEBI" id="CHEBI:37565"/>
    </ligand>
</feature>
<feature type="binding site" evidence="1">
    <location>
        <begin position="92"/>
        <end position="94"/>
    </location>
    <ligand>
        <name>GTP</name>
        <dbReference type="ChEBI" id="CHEBI:37565"/>
    </ligand>
</feature>
<feature type="binding site" evidence="1">
    <location>
        <position position="114"/>
    </location>
    <ligand>
        <name>GTP</name>
        <dbReference type="ChEBI" id="CHEBI:37565"/>
    </ligand>
</feature>
<feature type="binding site" evidence="1">
    <location>
        <position position="149"/>
    </location>
    <ligand>
        <name>GTP</name>
        <dbReference type="ChEBI" id="CHEBI:37565"/>
    </ligand>
</feature>
<feature type="binding site" evidence="1">
    <location>
        <position position="154"/>
    </location>
    <ligand>
        <name>GTP</name>
        <dbReference type="ChEBI" id="CHEBI:37565"/>
    </ligand>
</feature>
<comment type="function">
    <text evidence="1">Catalyzes the conversion of GTP to 2,5-diamino-6-ribosylamino-4(3H)-pyrimidinone 5'-phosphate (DARP), formate and pyrophosphate.</text>
</comment>
<comment type="catalytic activity">
    <reaction evidence="1">
        <text>GTP + 4 H2O = 2,5-diamino-6-hydroxy-4-(5-phosphoribosylamino)-pyrimidine + formate + 2 phosphate + 3 H(+)</text>
        <dbReference type="Rhea" id="RHEA:23704"/>
        <dbReference type="ChEBI" id="CHEBI:15377"/>
        <dbReference type="ChEBI" id="CHEBI:15378"/>
        <dbReference type="ChEBI" id="CHEBI:15740"/>
        <dbReference type="ChEBI" id="CHEBI:37565"/>
        <dbReference type="ChEBI" id="CHEBI:43474"/>
        <dbReference type="ChEBI" id="CHEBI:58614"/>
        <dbReference type="EC" id="3.5.4.25"/>
    </reaction>
</comment>
<comment type="cofactor">
    <cofactor evidence="1">
        <name>Zn(2+)</name>
        <dbReference type="ChEBI" id="CHEBI:29105"/>
    </cofactor>
    <text evidence="1">Binds 1 zinc ion per subunit.</text>
</comment>
<comment type="pathway">
    <text evidence="1">Cofactor biosynthesis; riboflavin biosynthesis; 5-amino-6-(D-ribitylamino)uracil from GTP: step 1/4.</text>
</comment>
<comment type="similarity">
    <text evidence="1">Belongs to the GTP cyclohydrolase II family.</text>
</comment>
<dbReference type="EC" id="3.5.4.25" evidence="1"/>
<dbReference type="EMBL" id="AE004091">
    <property type="protein sequence ID" value="AAG07434.1"/>
    <property type="molecule type" value="Genomic_DNA"/>
</dbReference>
<dbReference type="PIR" id="B83140">
    <property type="entry name" value="B83140"/>
</dbReference>
<dbReference type="RefSeq" id="NP_252736.1">
    <property type="nucleotide sequence ID" value="NC_002516.2"/>
</dbReference>
<dbReference type="RefSeq" id="WP_003110510.1">
    <property type="nucleotide sequence ID" value="NZ_QZGE01000013.1"/>
</dbReference>
<dbReference type="SMR" id="Q9HWY1"/>
<dbReference type="FunCoup" id="Q9HWY1">
    <property type="interactions" value="184"/>
</dbReference>
<dbReference type="STRING" id="208964.PA4047"/>
<dbReference type="PaxDb" id="208964-PA4047"/>
<dbReference type="DNASU" id="879059"/>
<dbReference type="GeneID" id="879059"/>
<dbReference type="KEGG" id="pae:PA4047"/>
<dbReference type="PATRIC" id="fig|208964.12.peg.4238"/>
<dbReference type="PseudoCAP" id="PA4047"/>
<dbReference type="HOGENOM" id="CLU_020273_2_1_6"/>
<dbReference type="InParanoid" id="Q9HWY1"/>
<dbReference type="OrthoDB" id="9793111at2"/>
<dbReference type="PhylomeDB" id="Q9HWY1"/>
<dbReference type="BioCyc" id="PAER208964:G1FZ6-4120-MONOMER"/>
<dbReference type="UniPathway" id="UPA00275">
    <property type="reaction ID" value="UER00400"/>
</dbReference>
<dbReference type="Proteomes" id="UP000002438">
    <property type="component" value="Chromosome"/>
</dbReference>
<dbReference type="GO" id="GO:0005829">
    <property type="term" value="C:cytosol"/>
    <property type="evidence" value="ECO:0000318"/>
    <property type="project" value="GO_Central"/>
</dbReference>
<dbReference type="GO" id="GO:0005525">
    <property type="term" value="F:GTP binding"/>
    <property type="evidence" value="ECO:0007669"/>
    <property type="project" value="UniProtKB-KW"/>
</dbReference>
<dbReference type="GO" id="GO:0003935">
    <property type="term" value="F:GTP cyclohydrolase II activity"/>
    <property type="evidence" value="ECO:0000318"/>
    <property type="project" value="GO_Central"/>
</dbReference>
<dbReference type="GO" id="GO:0008270">
    <property type="term" value="F:zinc ion binding"/>
    <property type="evidence" value="ECO:0007669"/>
    <property type="project" value="UniProtKB-UniRule"/>
</dbReference>
<dbReference type="GO" id="GO:0009231">
    <property type="term" value="P:riboflavin biosynthetic process"/>
    <property type="evidence" value="ECO:0000318"/>
    <property type="project" value="GO_Central"/>
</dbReference>
<dbReference type="CDD" id="cd00641">
    <property type="entry name" value="GTP_cyclohydro2"/>
    <property type="match status" value="1"/>
</dbReference>
<dbReference type="FunFam" id="3.40.50.10990:FF:000002">
    <property type="entry name" value="GTP cyclohydrolase-2"/>
    <property type="match status" value="1"/>
</dbReference>
<dbReference type="Gene3D" id="3.40.50.10990">
    <property type="entry name" value="GTP cyclohydrolase II"/>
    <property type="match status" value="1"/>
</dbReference>
<dbReference type="HAMAP" id="MF_00179">
    <property type="entry name" value="RibA"/>
    <property type="match status" value="1"/>
</dbReference>
<dbReference type="InterPro" id="IPR032677">
    <property type="entry name" value="GTP_cyclohydro_II"/>
</dbReference>
<dbReference type="InterPro" id="IPR000926">
    <property type="entry name" value="RibA"/>
</dbReference>
<dbReference type="InterPro" id="IPR036144">
    <property type="entry name" value="RibA-like_sf"/>
</dbReference>
<dbReference type="NCBIfam" id="NF001591">
    <property type="entry name" value="PRK00393.1"/>
    <property type="match status" value="1"/>
</dbReference>
<dbReference type="NCBIfam" id="TIGR00505">
    <property type="entry name" value="ribA"/>
    <property type="match status" value="1"/>
</dbReference>
<dbReference type="PANTHER" id="PTHR21327:SF18">
    <property type="entry name" value="3,4-DIHYDROXY-2-BUTANONE 4-PHOSPHATE SYNTHASE"/>
    <property type="match status" value="1"/>
</dbReference>
<dbReference type="PANTHER" id="PTHR21327">
    <property type="entry name" value="GTP CYCLOHYDROLASE II-RELATED"/>
    <property type="match status" value="1"/>
</dbReference>
<dbReference type="Pfam" id="PF00925">
    <property type="entry name" value="GTP_cyclohydro2"/>
    <property type="match status" value="1"/>
</dbReference>
<dbReference type="SUPFAM" id="SSF142695">
    <property type="entry name" value="RibA-like"/>
    <property type="match status" value="1"/>
</dbReference>
<proteinExistence type="inferred from homology"/>
<name>RIBA_PSEAE</name>
<accession>Q9HWY1</accession>
<protein>
    <recommendedName>
        <fullName evidence="1">GTP cyclohydrolase-2</fullName>
        <ecNumber evidence="1">3.5.4.25</ecNumber>
    </recommendedName>
    <alternativeName>
        <fullName evidence="1">GTP cyclohydrolase II</fullName>
    </alternativeName>
</protein>
<gene>
    <name evidence="1" type="primary">ribA</name>
    <name type="ordered locus">PA4047</name>
</gene>
<organism>
    <name type="scientific">Pseudomonas aeruginosa (strain ATCC 15692 / DSM 22644 / CIP 104116 / JCM 14847 / LMG 12228 / 1C / PRS 101 / PAO1)</name>
    <dbReference type="NCBI Taxonomy" id="208964"/>
    <lineage>
        <taxon>Bacteria</taxon>
        <taxon>Pseudomonadati</taxon>
        <taxon>Pseudomonadota</taxon>
        <taxon>Gammaproteobacteria</taxon>
        <taxon>Pseudomonadales</taxon>
        <taxon>Pseudomonadaceae</taxon>
        <taxon>Pseudomonas</taxon>
    </lineage>
</organism>
<keyword id="KW-0342">GTP-binding</keyword>
<keyword id="KW-0378">Hydrolase</keyword>
<keyword id="KW-0479">Metal-binding</keyword>
<keyword id="KW-0547">Nucleotide-binding</keyword>
<keyword id="KW-1185">Reference proteome</keyword>
<keyword id="KW-0686">Riboflavin biosynthesis</keyword>
<keyword id="KW-0862">Zinc</keyword>
<evidence type="ECO:0000255" key="1">
    <source>
        <dbReference type="HAMAP-Rule" id="MF_00179"/>
    </source>
</evidence>